<dbReference type="EMBL" id="AE008922">
    <property type="protein sequence ID" value="AAM40770.1"/>
    <property type="molecule type" value="Genomic_DNA"/>
</dbReference>
<dbReference type="RefSeq" id="NP_636846.1">
    <property type="nucleotide sequence ID" value="NC_003902.1"/>
</dbReference>
<dbReference type="RefSeq" id="WP_011036660.1">
    <property type="nucleotide sequence ID" value="NC_003902.1"/>
</dbReference>
<dbReference type="SMR" id="Q8PAK9"/>
<dbReference type="STRING" id="190485.XCC1474"/>
<dbReference type="EnsemblBacteria" id="AAM40770">
    <property type="protein sequence ID" value="AAM40770"/>
    <property type="gene ID" value="XCC1474"/>
</dbReference>
<dbReference type="KEGG" id="xcc:XCC1474"/>
<dbReference type="PATRIC" id="fig|190485.4.peg.1578"/>
<dbReference type="eggNOG" id="COG0443">
    <property type="taxonomic scope" value="Bacteria"/>
</dbReference>
<dbReference type="HOGENOM" id="CLU_005965_2_1_6"/>
<dbReference type="OrthoDB" id="9766019at2"/>
<dbReference type="Proteomes" id="UP000001010">
    <property type="component" value="Chromosome"/>
</dbReference>
<dbReference type="GO" id="GO:0005829">
    <property type="term" value="C:cytosol"/>
    <property type="evidence" value="ECO:0000318"/>
    <property type="project" value="GO_Central"/>
</dbReference>
<dbReference type="GO" id="GO:0005524">
    <property type="term" value="F:ATP binding"/>
    <property type="evidence" value="ECO:0007669"/>
    <property type="project" value="UniProtKB-UniRule"/>
</dbReference>
<dbReference type="GO" id="GO:0016887">
    <property type="term" value="F:ATP hydrolysis activity"/>
    <property type="evidence" value="ECO:0000318"/>
    <property type="project" value="GO_Central"/>
</dbReference>
<dbReference type="GO" id="GO:0140662">
    <property type="term" value="F:ATP-dependent protein folding chaperone"/>
    <property type="evidence" value="ECO:0007669"/>
    <property type="project" value="InterPro"/>
</dbReference>
<dbReference type="GO" id="GO:0031072">
    <property type="term" value="F:heat shock protein binding"/>
    <property type="evidence" value="ECO:0000318"/>
    <property type="project" value="GO_Central"/>
</dbReference>
<dbReference type="GO" id="GO:0044183">
    <property type="term" value="F:protein folding chaperone"/>
    <property type="evidence" value="ECO:0000318"/>
    <property type="project" value="GO_Central"/>
</dbReference>
<dbReference type="GO" id="GO:0051082">
    <property type="term" value="F:unfolded protein binding"/>
    <property type="evidence" value="ECO:0007669"/>
    <property type="project" value="InterPro"/>
</dbReference>
<dbReference type="GO" id="GO:0051085">
    <property type="term" value="P:chaperone cofactor-dependent protein refolding"/>
    <property type="evidence" value="ECO:0000318"/>
    <property type="project" value="GO_Central"/>
</dbReference>
<dbReference type="GO" id="GO:0042026">
    <property type="term" value="P:protein refolding"/>
    <property type="evidence" value="ECO:0000318"/>
    <property type="project" value="GO_Central"/>
</dbReference>
<dbReference type="CDD" id="cd10234">
    <property type="entry name" value="ASKHA_NBD_HSP70_DnaK-like"/>
    <property type="match status" value="1"/>
</dbReference>
<dbReference type="FunFam" id="2.60.34.10:FF:000014">
    <property type="entry name" value="Chaperone protein DnaK HSP70"/>
    <property type="match status" value="1"/>
</dbReference>
<dbReference type="FunFam" id="3.30.30.30:FF:000003">
    <property type="entry name" value="Heat shock protein 9"/>
    <property type="match status" value="1"/>
</dbReference>
<dbReference type="FunFam" id="1.20.1270.10:FF:000001">
    <property type="entry name" value="Molecular chaperone DnaK"/>
    <property type="match status" value="1"/>
</dbReference>
<dbReference type="FunFam" id="3.30.420.40:FF:000004">
    <property type="entry name" value="Molecular chaperone DnaK"/>
    <property type="match status" value="1"/>
</dbReference>
<dbReference type="FunFam" id="3.90.640.10:FF:000003">
    <property type="entry name" value="Molecular chaperone DnaK"/>
    <property type="match status" value="1"/>
</dbReference>
<dbReference type="Gene3D" id="1.20.1270.10">
    <property type="match status" value="1"/>
</dbReference>
<dbReference type="Gene3D" id="3.30.420.40">
    <property type="match status" value="2"/>
</dbReference>
<dbReference type="Gene3D" id="3.90.640.10">
    <property type="entry name" value="Actin, Chain A, domain 4"/>
    <property type="match status" value="1"/>
</dbReference>
<dbReference type="Gene3D" id="2.60.34.10">
    <property type="entry name" value="Substrate Binding Domain Of DNAk, Chain A, domain 1"/>
    <property type="match status" value="1"/>
</dbReference>
<dbReference type="HAMAP" id="MF_00332">
    <property type="entry name" value="DnaK"/>
    <property type="match status" value="1"/>
</dbReference>
<dbReference type="InterPro" id="IPR043129">
    <property type="entry name" value="ATPase_NBD"/>
</dbReference>
<dbReference type="InterPro" id="IPR012725">
    <property type="entry name" value="Chaperone_DnaK"/>
</dbReference>
<dbReference type="InterPro" id="IPR018181">
    <property type="entry name" value="Heat_shock_70_CS"/>
</dbReference>
<dbReference type="InterPro" id="IPR029048">
    <property type="entry name" value="HSP70_C_sf"/>
</dbReference>
<dbReference type="InterPro" id="IPR029047">
    <property type="entry name" value="HSP70_peptide-bd_sf"/>
</dbReference>
<dbReference type="InterPro" id="IPR013126">
    <property type="entry name" value="Hsp_70_fam"/>
</dbReference>
<dbReference type="NCBIfam" id="NF001413">
    <property type="entry name" value="PRK00290.1"/>
    <property type="match status" value="1"/>
</dbReference>
<dbReference type="NCBIfam" id="NF003520">
    <property type="entry name" value="PRK05183.1"/>
    <property type="match status" value="1"/>
</dbReference>
<dbReference type="NCBIfam" id="TIGR02350">
    <property type="entry name" value="prok_dnaK"/>
    <property type="match status" value="1"/>
</dbReference>
<dbReference type="PANTHER" id="PTHR19375">
    <property type="entry name" value="HEAT SHOCK PROTEIN 70KDA"/>
    <property type="match status" value="1"/>
</dbReference>
<dbReference type="Pfam" id="PF00012">
    <property type="entry name" value="HSP70"/>
    <property type="match status" value="1"/>
</dbReference>
<dbReference type="PRINTS" id="PR00301">
    <property type="entry name" value="HEATSHOCK70"/>
</dbReference>
<dbReference type="SUPFAM" id="SSF53067">
    <property type="entry name" value="Actin-like ATPase domain"/>
    <property type="match status" value="2"/>
</dbReference>
<dbReference type="SUPFAM" id="SSF100920">
    <property type="entry name" value="Heat shock protein 70kD (HSP70), peptide-binding domain"/>
    <property type="match status" value="1"/>
</dbReference>
<dbReference type="PROSITE" id="PS00297">
    <property type="entry name" value="HSP70_1"/>
    <property type="match status" value="1"/>
</dbReference>
<dbReference type="PROSITE" id="PS00329">
    <property type="entry name" value="HSP70_2"/>
    <property type="match status" value="1"/>
</dbReference>
<dbReference type="PROSITE" id="PS01036">
    <property type="entry name" value="HSP70_3"/>
    <property type="match status" value="1"/>
</dbReference>
<reference key="1">
    <citation type="journal article" date="2002" name="Nature">
        <title>Comparison of the genomes of two Xanthomonas pathogens with differing host specificities.</title>
        <authorList>
            <person name="da Silva A.C.R."/>
            <person name="Ferro J.A."/>
            <person name="Reinach F.C."/>
            <person name="Farah C.S."/>
            <person name="Furlan L.R."/>
            <person name="Quaggio R.B."/>
            <person name="Monteiro-Vitorello C.B."/>
            <person name="Van Sluys M.A."/>
            <person name="Almeida N.F. Jr."/>
            <person name="Alves L.M.C."/>
            <person name="do Amaral A.M."/>
            <person name="Bertolini M.C."/>
            <person name="Camargo L.E.A."/>
            <person name="Camarotte G."/>
            <person name="Cannavan F."/>
            <person name="Cardozo J."/>
            <person name="Chambergo F."/>
            <person name="Ciapina L.P."/>
            <person name="Cicarelli R.M.B."/>
            <person name="Coutinho L.L."/>
            <person name="Cursino-Santos J.R."/>
            <person name="El-Dorry H."/>
            <person name="Faria J.B."/>
            <person name="Ferreira A.J.S."/>
            <person name="Ferreira R.C.C."/>
            <person name="Ferro M.I.T."/>
            <person name="Formighieri E.F."/>
            <person name="Franco M.C."/>
            <person name="Greggio C.C."/>
            <person name="Gruber A."/>
            <person name="Katsuyama A.M."/>
            <person name="Kishi L.T."/>
            <person name="Leite R.P."/>
            <person name="Lemos E.G.M."/>
            <person name="Lemos M.V.F."/>
            <person name="Locali E.C."/>
            <person name="Machado M.A."/>
            <person name="Madeira A.M.B.N."/>
            <person name="Martinez-Rossi N.M."/>
            <person name="Martins E.C."/>
            <person name="Meidanis J."/>
            <person name="Menck C.F.M."/>
            <person name="Miyaki C.Y."/>
            <person name="Moon D.H."/>
            <person name="Moreira L.M."/>
            <person name="Novo M.T.M."/>
            <person name="Okura V.K."/>
            <person name="Oliveira M.C."/>
            <person name="Oliveira V.R."/>
            <person name="Pereira H.A."/>
            <person name="Rossi A."/>
            <person name="Sena J.A.D."/>
            <person name="Silva C."/>
            <person name="de Souza R.F."/>
            <person name="Spinola L.A.F."/>
            <person name="Takita M.A."/>
            <person name="Tamura R.E."/>
            <person name="Teixeira E.C."/>
            <person name="Tezza R.I.D."/>
            <person name="Trindade dos Santos M."/>
            <person name="Truffi D."/>
            <person name="Tsai S.M."/>
            <person name="White F.F."/>
            <person name="Setubal J.C."/>
            <person name="Kitajima J.P."/>
        </authorList>
    </citation>
    <scope>NUCLEOTIDE SEQUENCE [LARGE SCALE GENOMIC DNA]</scope>
    <source>
        <strain>ATCC 33913 / DSM 3586 / NCPPB 528 / LMG 568 / P 25</strain>
    </source>
</reference>
<comment type="function">
    <text evidence="1">Acts as a chaperone.</text>
</comment>
<comment type="induction">
    <text evidence="1">By stress conditions e.g. heat shock.</text>
</comment>
<comment type="similarity">
    <text evidence="1">Belongs to the heat shock protein 70 family.</text>
</comment>
<gene>
    <name evidence="1" type="primary">dnaK</name>
    <name type="ordered locus">XCC1474</name>
</gene>
<name>DNAK_XANCP</name>
<organism>
    <name type="scientific">Xanthomonas campestris pv. campestris (strain ATCC 33913 / DSM 3586 / NCPPB 528 / LMG 568 / P 25)</name>
    <dbReference type="NCBI Taxonomy" id="190485"/>
    <lineage>
        <taxon>Bacteria</taxon>
        <taxon>Pseudomonadati</taxon>
        <taxon>Pseudomonadota</taxon>
        <taxon>Gammaproteobacteria</taxon>
        <taxon>Lysobacterales</taxon>
        <taxon>Lysobacteraceae</taxon>
        <taxon>Xanthomonas</taxon>
    </lineage>
</organism>
<accession>Q8PAK9</accession>
<feature type="chain" id="PRO_0000078590" description="Chaperone protein DnaK">
    <location>
        <begin position="1"/>
        <end position="642"/>
    </location>
</feature>
<feature type="region of interest" description="Disordered" evidence="2">
    <location>
        <begin position="603"/>
        <end position="627"/>
    </location>
</feature>
<feature type="compositionally biased region" description="Low complexity" evidence="2">
    <location>
        <begin position="603"/>
        <end position="623"/>
    </location>
</feature>
<feature type="modified residue" description="Phosphothreonine; by autocatalysis" evidence="1">
    <location>
        <position position="200"/>
    </location>
</feature>
<sequence length="642" mass="68837">MGKIIGIDLGTTNSCVAIMDGGKARVIENSEGDRTTPSIVAYTKDGEVLVGASAKRQAVTNPKNTFYAVKRLIGRKFTDGEVQKDISHVPYGILAHDNGDAWVQTSDSKRMAPQEISARVLEKMKKTAEDFLGEKVTEAVITVPAYFNDSQRQATKDAGRIAGLDVKRIINEPTAAALAYGLDKNGGDRKIAVYDLGGGTFDVSIIEIAEVDGEKQFEVLATNGDTFLGGEDFDNRVIEYLVDEFNKDQGIDLRKDPLALQRLKDAAERAKIELSTSQQTEVNLPYVTADASGPKHLNIKLTRAKLEALVEDLVKKSIEPCRTALNDAGLRASDINEVILVGGQTRMPKVQQAVADFFGKEPRKDVNPDEAVAVGAAIQGGVLAGDVKDVLLLDVTPLSLGIETMGGVFTKIIEKNTTIPTKASQTFSTAEDNQSAVTVHVLQGEREQARFNKSLAKFDLSGIEPAPRGMPQVEVSFDIDANGILHVSAKDKKTNKEQKVEIKAGSGLSDEEIQRMVADAEANREEDKKFQELVQTRNQADGLIHATRTAITEHGSKVGGDVIGKVEAALADLETAMKGDDKAQIEARSKTLEEAGQSLYAAAAAAEQGGNADAASGNAQASKAADDVVDAEFTEVKDDKKA</sequence>
<evidence type="ECO:0000255" key="1">
    <source>
        <dbReference type="HAMAP-Rule" id="MF_00332"/>
    </source>
</evidence>
<evidence type="ECO:0000256" key="2">
    <source>
        <dbReference type="SAM" id="MobiDB-lite"/>
    </source>
</evidence>
<keyword id="KW-0067">ATP-binding</keyword>
<keyword id="KW-0143">Chaperone</keyword>
<keyword id="KW-0547">Nucleotide-binding</keyword>
<keyword id="KW-0597">Phosphoprotein</keyword>
<keyword id="KW-1185">Reference proteome</keyword>
<keyword id="KW-0346">Stress response</keyword>
<protein>
    <recommendedName>
        <fullName evidence="1">Chaperone protein DnaK</fullName>
    </recommendedName>
    <alternativeName>
        <fullName evidence="1">HSP70</fullName>
    </alternativeName>
    <alternativeName>
        <fullName evidence="1">Heat shock 70 kDa protein</fullName>
    </alternativeName>
    <alternativeName>
        <fullName evidence="1">Heat shock protein 70</fullName>
    </alternativeName>
</protein>
<proteinExistence type="inferred from homology"/>